<organism>
    <name type="scientific">Vibrio cholerae serotype O1 (strain M66-2)</name>
    <dbReference type="NCBI Taxonomy" id="579112"/>
    <lineage>
        <taxon>Bacteria</taxon>
        <taxon>Pseudomonadati</taxon>
        <taxon>Pseudomonadota</taxon>
        <taxon>Gammaproteobacteria</taxon>
        <taxon>Vibrionales</taxon>
        <taxon>Vibrionaceae</taxon>
        <taxon>Vibrio</taxon>
    </lineage>
</organism>
<name>ILVD_VIBCM</name>
<dbReference type="EC" id="4.2.1.9" evidence="1"/>
<dbReference type="EMBL" id="CP001233">
    <property type="protein sequence ID" value="ACP04365.1"/>
    <property type="molecule type" value="Genomic_DNA"/>
</dbReference>
<dbReference type="RefSeq" id="WP_001127457.1">
    <property type="nucleotide sequence ID" value="NC_012578.1"/>
</dbReference>
<dbReference type="SMR" id="C3LPA1"/>
<dbReference type="GeneID" id="69721184"/>
<dbReference type="KEGG" id="vcm:VCM66_0028"/>
<dbReference type="HOGENOM" id="CLU_014271_4_2_6"/>
<dbReference type="UniPathway" id="UPA00047">
    <property type="reaction ID" value="UER00057"/>
</dbReference>
<dbReference type="UniPathway" id="UPA00049">
    <property type="reaction ID" value="UER00061"/>
</dbReference>
<dbReference type="Proteomes" id="UP000001217">
    <property type="component" value="Chromosome I"/>
</dbReference>
<dbReference type="GO" id="GO:0005829">
    <property type="term" value="C:cytosol"/>
    <property type="evidence" value="ECO:0007669"/>
    <property type="project" value="TreeGrafter"/>
</dbReference>
<dbReference type="GO" id="GO:0051537">
    <property type="term" value="F:2 iron, 2 sulfur cluster binding"/>
    <property type="evidence" value="ECO:0007669"/>
    <property type="project" value="UniProtKB-UniRule"/>
</dbReference>
<dbReference type="GO" id="GO:0004160">
    <property type="term" value="F:dihydroxy-acid dehydratase activity"/>
    <property type="evidence" value="ECO:0007669"/>
    <property type="project" value="UniProtKB-UniRule"/>
</dbReference>
<dbReference type="GO" id="GO:0000287">
    <property type="term" value="F:magnesium ion binding"/>
    <property type="evidence" value="ECO:0007669"/>
    <property type="project" value="UniProtKB-UniRule"/>
</dbReference>
<dbReference type="GO" id="GO:0009097">
    <property type="term" value="P:isoleucine biosynthetic process"/>
    <property type="evidence" value="ECO:0007669"/>
    <property type="project" value="UniProtKB-UniRule"/>
</dbReference>
<dbReference type="GO" id="GO:0009099">
    <property type="term" value="P:L-valine biosynthetic process"/>
    <property type="evidence" value="ECO:0007669"/>
    <property type="project" value="UniProtKB-UniRule"/>
</dbReference>
<dbReference type="FunFam" id="3.50.30.80:FF:000001">
    <property type="entry name" value="Dihydroxy-acid dehydratase"/>
    <property type="match status" value="1"/>
</dbReference>
<dbReference type="Gene3D" id="3.50.30.80">
    <property type="entry name" value="IlvD/EDD C-terminal domain-like"/>
    <property type="match status" value="1"/>
</dbReference>
<dbReference type="HAMAP" id="MF_00012">
    <property type="entry name" value="IlvD"/>
    <property type="match status" value="1"/>
</dbReference>
<dbReference type="InterPro" id="IPR042096">
    <property type="entry name" value="Dihydro-acid_dehy_C"/>
</dbReference>
<dbReference type="InterPro" id="IPR004404">
    <property type="entry name" value="DihydroxyA_deHydtase"/>
</dbReference>
<dbReference type="InterPro" id="IPR020558">
    <property type="entry name" value="DiOHA_6PGluconate_deHydtase_CS"/>
</dbReference>
<dbReference type="InterPro" id="IPR056740">
    <property type="entry name" value="ILV_EDD_C"/>
</dbReference>
<dbReference type="InterPro" id="IPR000581">
    <property type="entry name" value="ILV_EDD_N"/>
</dbReference>
<dbReference type="InterPro" id="IPR037237">
    <property type="entry name" value="IlvD/EDD_N"/>
</dbReference>
<dbReference type="NCBIfam" id="TIGR00110">
    <property type="entry name" value="ilvD"/>
    <property type="match status" value="1"/>
</dbReference>
<dbReference type="NCBIfam" id="NF009103">
    <property type="entry name" value="PRK12448.1"/>
    <property type="match status" value="1"/>
</dbReference>
<dbReference type="PANTHER" id="PTHR43661">
    <property type="entry name" value="D-XYLONATE DEHYDRATASE"/>
    <property type="match status" value="1"/>
</dbReference>
<dbReference type="PANTHER" id="PTHR43661:SF3">
    <property type="entry name" value="D-XYLONATE DEHYDRATASE YAGF-RELATED"/>
    <property type="match status" value="1"/>
</dbReference>
<dbReference type="Pfam" id="PF24877">
    <property type="entry name" value="ILV_EDD_C"/>
    <property type="match status" value="1"/>
</dbReference>
<dbReference type="Pfam" id="PF00920">
    <property type="entry name" value="ILVD_EDD_N"/>
    <property type="match status" value="1"/>
</dbReference>
<dbReference type="SUPFAM" id="SSF143975">
    <property type="entry name" value="IlvD/EDD N-terminal domain-like"/>
    <property type="match status" value="1"/>
</dbReference>
<dbReference type="SUPFAM" id="SSF52016">
    <property type="entry name" value="LeuD/IlvD-like"/>
    <property type="match status" value="1"/>
</dbReference>
<dbReference type="PROSITE" id="PS00886">
    <property type="entry name" value="ILVD_EDD_1"/>
    <property type="match status" value="1"/>
</dbReference>
<dbReference type="PROSITE" id="PS00887">
    <property type="entry name" value="ILVD_EDD_2"/>
    <property type="match status" value="1"/>
</dbReference>
<evidence type="ECO:0000255" key="1">
    <source>
        <dbReference type="HAMAP-Rule" id="MF_00012"/>
    </source>
</evidence>
<reference key="1">
    <citation type="journal article" date="2008" name="PLoS ONE">
        <title>A recalibrated molecular clock and independent origins for the cholera pandemic clones.</title>
        <authorList>
            <person name="Feng L."/>
            <person name="Reeves P.R."/>
            <person name="Lan R."/>
            <person name="Ren Y."/>
            <person name="Gao C."/>
            <person name="Zhou Z."/>
            <person name="Ren Y."/>
            <person name="Cheng J."/>
            <person name="Wang W."/>
            <person name="Wang J."/>
            <person name="Qian W."/>
            <person name="Li D."/>
            <person name="Wang L."/>
        </authorList>
    </citation>
    <scope>NUCLEOTIDE SEQUENCE [LARGE SCALE GENOMIC DNA]</scope>
    <source>
        <strain>M66-2</strain>
    </source>
</reference>
<gene>
    <name evidence="1" type="primary">ilvD</name>
    <name type="ordered locus">VCM66_0028</name>
</gene>
<feature type="chain" id="PRO_1000116533" description="Dihydroxy-acid dehydratase">
    <location>
        <begin position="1"/>
        <end position="613"/>
    </location>
</feature>
<feature type="active site" description="Proton acceptor" evidence="1">
    <location>
        <position position="517"/>
    </location>
</feature>
<feature type="binding site" evidence="1">
    <location>
        <position position="81"/>
    </location>
    <ligand>
        <name>Mg(2+)</name>
        <dbReference type="ChEBI" id="CHEBI:18420"/>
    </ligand>
</feature>
<feature type="binding site" evidence="1">
    <location>
        <position position="122"/>
    </location>
    <ligand>
        <name>[2Fe-2S] cluster</name>
        <dbReference type="ChEBI" id="CHEBI:190135"/>
    </ligand>
</feature>
<feature type="binding site" evidence="1">
    <location>
        <position position="123"/>
    </location>
    <ligand>
        <name>Mg(2+)</name>
        <dbReference type="ChEBI" id="CHEBI:18420"/>
    </ligand>
</feature>
<feature type="binding site" description="via carbamate group" evidence="1">
    <location>
        <position position="124"/>
    </location>
    <ligand>
        <name>Mg(2+)</name>
        <dbReference type="ChEBI" id="CHEBI:18420"/>
    </ligand>
</feature>
<feature type="binding site" evidence="1">
    <location>
        <position position="195"/>
    </location>
    <ligand>
        <name>[2Fe-2S] cluster</name>
        <dbReference type="ChEBI" id="CHEBI:190135"/>
    </ligand>
</feature>
<feature type="binding site" evidence="1">
    <location>
        <position position="491"/>
    </location>
    <ligand>
        <name>Mg(2+)</name>
        <dbReference type="ChEBI" id="CHEBI:18420"/>
    </ligand>
</feature>
<feature type="modified residue" description="N6-carboxylysine" evidence="1">
    <location>
        <position position="124"/>
    </location>
</feature>
<proteinExistence type="inferred from homology"/>
<keyword id="KW-0001">2Fe-2S</keyword>
<keyword id="KW-0028">Amino-acid biosynthesis</keyword>
<keyword id="KW-0100">Branched-chain amino acid biosynthesis</keyword>
<keyword id="KW-0408">Iron</keyword>
<keyword id="KW-0411">Iron-sulfur</keyword>
<keyword id="KW-0456">Lyase</keyword>
<keyword id="KW-0460">Magnesium</keyword>
<keyword id="KW-0479">Metal-binding</keyword>
<accession>C3LPA1</accession>
<sequence length="613" mass="65437">MPKYRSATTTHGRNMAGARALWRATGVKEEDFGKPIIAVVNSFTQFVPGHVHLKDLGQLVAREIEAAGGIAKEFNTIAVDDGIAMGHGGMLYSLPSRELIADSVEYMVNAHCADAMVCISNCDKITPGMLMAAMRLNIPAIFVSGGPMEAGKTKLSDQIIKLDLVDAMMQGADPKVSDAQSEQIERSACPTCGSCSGMFTANSMNCLTEALGLSQPGNGSLLATHADRKQLFLTAGQRIVELTKRYYEQDDASVLPRNIANKAAFENAIALDIAMGGSTNTVLHLLAAAQEGEVEFDMTDIDRMSRQVPHLCKVAPSTQKYHMEDVHRAGGVMGILGELQRAGLLKDQTRTVLGISLQEQLAQYDVKQTQDPAVHTMFRAGPAGIRTTQAFSQDCRWDTLDDDRQEGCIRDKAHAFSQDGGLAVLKGNLAIDGCIVKTAGVDESILKFRGPAVVYESQEDAVNGILGGQVKAGDVVVIRYEGPKGGPGMQEMLYPTTYLKSMGLGKQCALLTDGRFSGGTSGLSIGHASPEAANGGTIGLVRSGDSIAIDIPNRSITLEVSESELAARRAEQDKLGWKPVDRQRTVSLALKAYASMATSADKGAVRDKSKLEG</sequence>
<protein>
    <recommendedName>
        <fullName evidence="1">Dihydroxy-acid dehydratase</fullName>
        <shortName evidence="1">DAD</shortName>
        <ecNumber evidence="1">4.2.1.9</ecNumber>
    </recommendedName>
</protein>
<comment type="function">
    <text evidence="1">Functions in the biosynthesis of branched-chain amino acids. Catalyzes the dehydration of (2R,3R)-2,3-dihydroxy-3-methylpentanoate (2,3-dihydroxy-3-methylvalerate) into 2-oxo-3-methylpentanoate (2-oxo-3-methylvalerate) and of (2R)-2,3-dihydroxy-3-methylbutanoate (2,3-dihydroxyisovalerate) into 2-oxo-3-methylbutanoate (2-oxoisovalerate), the penultimate precursor to L-isoleucine and L-valine, respectively.</text>
</comment>
<comment type="catalytic activity">
    <reaction evidence="1">
        <text>(2R)-2,3-dihydroxy-3-methylbutanoate = 3-methyl-2-oxobutanoate + H2O</text>
        <dbReference type="Rhea" id="RHEA:24809"/>
        <dbReference type="ChEBI" id="CHEBI:11851"/>
        <dbReference type="ChEBI" id="CHEBI:15377"/>
        <dbReference type="ChEBI" id="CHEBI:49072"/>
        <dbReference type="EC" id="4.2.1.9"/>
    </reaction>
    <physiologicalReaction direction="left-to-right" evidence="1">
        <dbReference type="Rhea" id="RHEA:24810"/>
    </physiologicalReaction>
</comment>
<comment type="catalytic activity">
    <reaction evidence="1">
        <text>(2R,3R)-2,3-dihydroxy-3-methylpentanoate = (S)-3-methyl-2-oxopentanoate + H2O</text>
        <dbReference type="Rhea" id="RHEA:27694"/>
        <dbReference type="ChEBI" id="CHEBI:15377"/>
        <dbReference type="ChEBI" id="CHEBI:35146"/>
        <dbReference type="ChEBI" id="CHEBI:49258"/>
        <dbReference type="EC" id="4.2.1.9"/>
    </reaction>
    <physiologicalReaction direction="left-to-right" evidence="1">
        <dbReference type="Rhea" id="RHEA:27695"/>
    </physiologicalReaction>
</comment>
<comment type="cofactor">
    <cofactor evidence="1">
        <name>[2Fe-2S] cluster</name>
        <dbReference type="ChEBI" id="CHEBI:190135"/>
    </cofactor>
    <text evidence="1">Binds 1 [2Fe-2S] cluster per subunit. This cluster acts as a Lewis acid cofactor.</text>
</comment>
<comment type="cofactor">
    <cofactor evidence="1">
        <name>Mg(2+)</name>
        <dbReference type="ChEBI" id="CHEBI:18420"/>
    </cofactor>
</comment>
<comment type="pathway">
    <text evidence="1">Amino-acid biosynthesis; L-isoleucine biosynthesis; L-isoleucine from 2-oxobutanoate: step 3/4.</text>
</comment>
<comment type="pathway">
    <text evidence="1">Amino-acid biosynthesis; L-valine biosynthesis; L-valine from pyruvate: step 3/4.</text>
</comment>
<comment type="subunit">
    <text evidence="1">Homodimer.</text>
</comment>
<comment type="similarity">
    <text evidence="1">Belongs to the IlvD/Edd family.</text>
</comment>